<evidence type="ECO:0000250" key="1">
    <source>
        <dbReference type="UniProtKB" id="Q53TN4"/>
    </source>
</evidence>
<evidence type="ECO:0000250" key="2">
    <source>
        <dbReference type="UniProtKB" id="Q6P1H1"/>
    </source>
</evidence>
<evidence type="ECO:0000255" key="3"/>
<evidence type="ECO:0000255" key="4">
    <source>
        <dbReference type="PROSITE-ProRule" id="PRU00242"/>
    </source>
</evidence>
<evidence type="ECO:0000305" key="5"/>
<dbReference type="EC" id="7.2.1.3" evidence="2"/>
<dbReference type="EMBL" id="BX323062">
    <property type="protein sequence ID" value="CAM47032.1"/>
    <property type="molecule type" value="Genomic_DNA"/>
</dbReference>
<dbReference type="EMBL" id="BC093310">
    <property type="protein sequence ID" value="AAH93310.1"/>
    <property type="status" value="ALT_SEQ"/>
    <property type="molecule type" value="mRNA"/>
</dbReference>
<dbReference type="EMBL" id="BC153668">
    <property type="protein sequence ID" value="AAI53669.1"/>
    <property type="molecule type" value="mRNA"/>
</dbReference>
<dbReference type="RefSeq" id="NP_001099054.1">
    <property type="nucleotide sequence ID" value="NM_001105584.1"/>
</dbReference>
<dbReference type="RefSeq" id="XP_068077139.1">
    <property type="nucleotide sequence ID" value="XM_068221038.1"/>
</dbReference>
<dbReference type="SMR" id="A3KPR5"/>
<dbReference type="FunCoup" id="A3KPR5">
    <property type="interactions" value="468"/>
</dbReference>
<dbReference type="STRING" id="7955.ENSDARP00000089361"/>
<dbReference type="GlyCosmos" id="A3KPR5">
    <property type="glycosylation" value="1 site, No reported glycans"/>
</dbReference>
<dbReference type="PaxDb" id="7955-ENSDARP00000120020"/>
<dbReference type="Ensembl" id="ENSDART00000098590">
    <property type="protein sequence ID" value="ENSDARP00000089361"/>
    <property type="gene ID" value="ENSDARG00000056281"/>
</dbReference>
<dbReference type="Ensembl" id="ENSDART00000146285">
    <property type="protein sequence ID" value="ENSDARP00000120020"/>
    <property type="gene ID" value="ENSDARG00000056281"/>
</dbReference>
<dbReference type="GeneID" id="100002371"/>
<dbReference type="KEGG" id="dre:100002371"/>
<dbReference type="AGR" id="ZFIN:ZDB-GENE-060526-374"/>
<dbReference type="CTD" id="100002371"/>
<dbReference type="ZFIN" id="ZDB-GENE-060526-374">
    <property type="gene designation" value="cyb561a3a"/>
</dbReference>
<dbReference type="eggNOG" id="KOG1619">
    <property type="taxonomic scope" value="Eukaryota"/>
</dbReference>
<dbReference type="HOGENOM" id="CLU_069712_1_3_1"/>
<dbReference type="InParanoid" id="A3KPR5"/>
<dbReference type="OMA" id="LSTIYWM"/>
<dbReference type="OrthoDB" id="907479at2759"/>
<dbReference type="PhylomeDB" id="A3KPR5"/>
<dbReference type="TreeFam" id="TF314222"/>
<dbReference type="PRO" id="PR:A3KPR5"/>
<dbReference type="Proteomes" id="UP000000437">
    <property type="component" value="Chromosome 5"/>
</dbReference>
<dbReference type="Bgee" id="ENSDARG00000056281">
    <property type="expression patterns" value="Expressed in mature ovarian follicle and 19 other cell types or tissues"/>
</dbReference>
<dbReference type="GO" id="GO:0031902">
    <property type="term" value="C:late endosome membrane"/>
    <property type="evidence" value="ECO:0000250"/>
    <property type="project" value="UniProtKB"/>
</dbReference>
<dbReference type="GO" id="GO:0005765">
    <property type="term" value="C:lysosomal membrane"/>
    <property type="evidence" value="ECO:0000250"/>
    <property type="project" value="UniProtKB"/>
</dbReference>
<dbReference type="GO" id="GO:0046872">
    <property type="term" value="F:metal ion binding"/>
    <property type="evidence" value="ECO:0007669"/>
    <property type="project" value="UniProtKB-KW"/>
</dbReference>
<dbReference type="GO" id="GO:0016491">
    <property type="term" value="F:oxidoreductase activity"/>
    <property type="evidence" value="ECO:0000318"/>
    <property type="project" value="GO_Central"/>
</dbReference>
<dbReference type="GO" id="GO:0140571">
    <property type="term" value="F:transmembrane ascorbate ferrireductase activity"/>
    <property type="evidence" value="ECO:0000250"/>
    <property type="project" value="UniProtKB"/>
</dbReference>
<dbReference type="GO" id="GO:0006879">
    <property type="term" value="P:intracellular iron ion homeostasis"/>
    <property type="evidence" value="ECO:0000250"/>
    <property type="project" value="UniProtKB"/>
</dbReference>
<dbReference type="CDD" id="cd08762">
    <property type="entry name" value="Cyt_b561_CYBASC3"/>
    <property type="match status" value="1"/>
</dbReference>
<dbReference type="FunFam" id="1.20.120.1770:FF:000001">
    <property type="entry name" value="Cytochrome b reductase 1"/>
    <property type="match status" value="1"/>
</dbReference>
<dbReference type="Gene3D" id="1.20.120.1770">
    <property type="match status" value="1"/>
</dbReference>
<dbReference type="InterPro" id="IPR043205">
    <property type="entry name" value="CYB561/CYBRD1-like"/>
</dbReference>
<dbReference type="InterPro" id="IPR006593">
    <property type="entry name" value="Cyt_b561/ferric_Rdtase_TM"/>
</dbReference>
<dbReference type="PANTHER" id="PTHR10106">
    <property type="entry name" value="CYTOCHROME B561-RELATED"/>
    <property type="match status" value="1"/>
</dbReference>
<dbReference type="PANTHER" id="PTHR10106:SF38">
    <property type="entry name" value="LYSOSOMAL MEMBRANE ASCORBATE-DEPENDENT FERRIREDUCTASE CYB561A3"/>
    <property type="match status" value="1"/>
</dbReference>
<dbReference type="Pfam" id="PF03188">
    <property type="entry name" value="Cytochrom_B561"/>
    <property type="match status" value="1"/>
</dbReference>
<dbReference type="SMART" id="SM00665">
    <property type="entry name" value="B561"/>
    <property type="match status" value="1"/>
</dbReference>
<dbReference type="PROSITE" id="PS50939">
    <property type="entry name" value="CYTOCHROME_B561"/>
    <property type="match status" value="1"/>
</dbReference>
<keyword id="KW-0249">Electron transport</keyword>
<keyword id="KW-0967">Endosome</keyword>
<keyword id="KW-0325">Glycoprotein</keyword>
<keyword id="KW-0349">Heme</keyword>
<keyword id="KW-0408">Iron</keyword>
<keyword id="KW-0458">Lysosome</keyword>
<keyword id="KW-0472">Membrane</keyword>
<keyword id="KW-0479">Metal-binding</keyword>
<keyword id="KW-0560">Oxidoreductase</keyword>
<keyword id="KW-1185">Reference proteome</keyword>
<keyword id="KW-1278">Translocase</keyword>
<keyword id="KW-0812">Transmembrane</keyword>
<keyword id="KW-1133">Transmembrane helix</keyword>
<keyword id="KW-0813">Transport</keyword>
<sequence>MRGIVGFYITYLLCLILGIACVVLVVHWNFMYRDGFAWDGSSKNFNWHPVLMVTGMLVLYGNAAVVYRIPLTWGHNKLPWKLLHAGLLLLSFIFSVIGLCAVFNFHNVHHTANLYSLHSWVGICTAALFTAQWVMGFTSFLLPCTPMAVRAFVKPTHVWMGAMILVLSIVSCISGINEKLFFVLKETTNGTKPYSALPPEAVAANSLGVIIVAFGLVVLKILSNQMWQRPEPGDDEGVYRPLAYDGS</sequence>
<proteinExistence type="evidence at transcript level"/>
<accession>A3KPR5</accession>
<accession>A8E5P6</accession>
<accession>Q566W0</accession>
<name>CYAC3_DANRE</name>
<organism>
    <name type="scientific">Danio rerio</name>
    <name type="common">Zebrafish</name>
    <name type="synonym">Brachydanio rerio</name>
    <dbReference type="NCBI Taxonomy" id="7955"/>
    <lineage>
        <taxon>Eukaryota</taxon>
        <taxon>Metazoa</taxon>
        <taxon>Chordata</taxon>
        <taxon>Craniata</taxon>
        <taxon>Vertebrata</taxon>
        <taxon>Euteleostomi</taxon>
        <taxon>Actinopterygii</taxon>
        <taxon>Neopterygii</taxon>
        <taxon>Teleostei</taxon>
        <taxon>Ostariophysi</taxon>
        <taxon>Cypriniformes</taxon>
        <taxon>Danionidae</taxon>
        <taxon>Danioninae</taxon>
        <taxon>Danio</taxon>
    </lineage>
</organism>
<reference key="1">
    <citation type="journal article" date="2013" name="Nature">
        <title>The zebrafish reference genome sequence and its relationship to the human genome.</title>
        <authorList>
            <person name="Howe K."/>
            <person name="Clark M.D."/>
            <person name="Torroja C.F."/>
            <person name="Torrance J."/>
            <person name="Berthelot C."/>
            <person name="Muffato M."/>
            <person name="Collins J.E."/>
            <person name="Humphray S."/>
            <person name="McLaren K."/>
            <person name="Matthews L."/>
            <person name="McLaren S."/>
            <person name="Sealy I."/>
            <person name="Caccamo M."/>
            <person name="Churcher C."/>
            <person name="Scott C."/>
            <person name="Barrett J.C."/>
            <person name="Koch R."/>
            <person name="Rauch G.J."/>
            <person name="White S."/>
            <person name="Chow W."/>
            <person name="Kilian B."/>
            <person name="Quintais L.T."/>
            <person name="Guerra-Assuncao J.A."/>
            <person name="Zhou Y."/>
            <person name="Gu Y."/>
            <person name="Yen J."/>
            <person name="Vogel J.H."/>
            <person name="Eyre T."/>
            <person name="Redmond S."/>
            <person name="Banerjee R."/>
            <person name="Chi J."/>
            <person name="Fu B."/>
            <person name="Langley E."/>
            <person name="Maguire S.F."/>
            <person name="Laird G.K."/>
            <person name="Lloyd D."/>
            <person name="Kenyon E."/>
            <person name="Donaldson S."/>
            <person name="Sehra H."/>
            <person name="Almeida-King J."/>
            <person name="Loveland J."/>
            <person name="Trevanion S."/>
            <person name="Jones M."/>
            <person name="Quail M."/>
            <person name="Willey D."/>
            <person name="Hunt A."/>
            <person name="Burton J."/>
            <person name="Sims S."/>
            <person name="McLay K."/>
            <person name="Plumb B."/>
            <person name="Davis J."/>
            <person name="Clee C."/>
            <person name="Oliver K."/>
            <person name="Clark R."/>
            <person name="Riddle C."/>
            <person name="Elliot D."/>
            <person name="Threadgold G."/>
            <person name="Harden G."/>
            <person name="Ware D."/>
            <person name="Begum S."/>
            <person name="Mortimore B."/>
            <person name="Kerry G."/>
            <person name="Heath P."/>
            <person name="Phillimore B."/>
            <person name="Tracey A."/>
            <person name="Corby N."/>
            <person name="Dunn M."/>
            <person name="Johnson C."/>
            <person name="Wood J."/>
            <person name="Clark S."/>
            <person name="Pelan S."/>
            <person name="Griffiths G."/>
            <person name="Smith M."/>
            <person name="Glithero R."/>
            <person name="Howden P."/>
            <person name="Barker N."/>
            <person name="Lloyd C."/>
            <person name="Stevens C."/>
            <person name="Harley J."/>
            <person name="Holt K."/>
            <person name="Panagiotidis G."/>
            <person name="Lovell J."/>
            <person name="Beasley H."/>
            <person name="Henderson C."/>
            <person name="Gordon D."/>
            <person name="Auger K."/>
            <person name="Wright D."/>
            <person name="Collins J."/>
            <person name="Raisen C."/>
            <person name="Dyer L."/>
            <person name="Leung K."/>
            <person name="Robertson L."/>
            <person name="Ambridge K."/>
            <person name="Leongamornlert D."/>
            <person name="McGuire S."/>
            <person name="Gilderthorp R."/>
            <person name="Griffiths C."/>
            <person name="Manthravadi D."/>
            <person name="Nichol S."/>
            <person name="Barker G."/>
            <person name="Whitehead S."/>
            <person name="Kay M."/>
            <person name="Brown J."/>
            <person name="Murnane C."/>
            <person name="Gray E."/>
            <person name="Humphries M."/>
            <person name="Sycamore N."/>
            <person name="Barker D."/>
            <person name="Saunders D."/>
            <person name="Wallis J."/>
            <person name="Babbage A."/>
            <person name="Hammond S."/>
            <person name="Mashreghi-Mohammadi M."/>
            <person name="Barr L."/>
            <person name="Martin S."/>
            <person name="Wray P."/>
            <person name="Ellington A."/>
            <person name="Matthews N."/>
            <person name="Ellwood M."/>
            <person name="Woodmansey R."/>
            <person name="Clark G."/>
            <person name="Cooper J."/>
            <person name="Tromans A."/>
            <person name="Grafham D."/>
            <person name="Skuce C."/>
            <person name="Pandian R."/>
            <person name="Andrews R."/>
            <person name="Harrison E."/>
            <person name="Kimberley A."/>
            <person name="Garnett J."/>
            <person name="Fosker N."/>
            <person name="Hall R."/>
            <person name="Garner P."/>
            <person name="Kelly D."/>
            <person name="Bird C."/>
            <person name="Palmer S."/>
            <person name="Gehring I."/>
            <person name="Berger A."/>
            <person name="Dooley C.M."/>
            <person name="Ersan-Urun Z."/>
            <person name="Eser C."/>
            <person name="Geiger H."/>
            <person name="Geisler M."/>
            <person name="Karotki L."/>
            <person name="Kirn A."/>
            <person name="Konantz J."/>
            <person name="Konantz M."/>
            <person name="Oberlander M."/>
            <person name="Rudolph-Geiger S."/>
            <person name="Teucke M."/>
            <person name="Lanz C."/>
            <person name="Raddatz G."/>
            <person name="Osoegawa K."/>
            <person name="Zhu B."/>
            <person name="Rapp A."/>
            <person name="Widaa S."/>
            <person name="Langford C."/>
            <person name="Yang F."/>
            <person name="Schuster S.C."/>
            <person name="Carter N.P."/>
            <person name="Harrow J."/>
            <person name="Ning Z."/>
            <person name="Herrero J."/>
            <person name="Searle S.M."/>
            <person name="Enright A."/>
            <person name="Geisler R."/>
            <person name="Plasterk R.H."/>
            <person name="Lee C."/>
            <person name="Westerfield M."/>
            <person name="de Jong P.J."/>
            <person name="Zon L.I."/>
            <person name="Postlethwait J.H."/>
            <person name="Nusslein-Volhard C."/>
            <person name="Hubbard T.J."/>
            <person name="Roest Crollius H."/>
            <person name="Rogers J."/>
            <person name="Stemple D.L."/>
        </authorList>
    </citation>
    <scope>NUCLEOTIDE SEQUENCE [LARGE SCALE GENOMIC DNA]</scope>
    <source>
        <strain>Tuebingen</strain>
    </source>
</reference>
<reference key="2">
    <citation type="submission" date="2007-09" db="EMBL/GenBank/DDBJ databases">
        <authorList>
            <consortium name="NIH - Zebrafish Gene Collection (ZGC) project"/>
        </authorList>
    </citation>
    <scope>NUCLEOTIDE SEQUENCE [LARGE SCALE MRNA]</scope>
    <source>
        <tissue>Embryo</tissue>
        <tissue>Olfactory epithelium</tissue>
    </source>
</reference>
<feature type="chain" id="PRO_0000314841" description="Lysosomal membrane ascorbate-dependent ferrireductase CYB561A3">
    <location>
        <begin position="1"/>
        <end position="247"/>
    </location>
</feature>
<feature type="topological domain" description="Cytoplasmic" evidence="5">
    <location>
        <begin position="1"/>
        <end position="3"/>
    </location>
</feature>
<feature type="transmembrane region" description="Helical" evidence="3">
    <location>
        <begin position="4"/>
        <end position="24"/>
    </location>
</feature>
<feature type="topological domain" description="Lumenal" evidence="5">
    <location>
        <begin position="25"/>
        <end position="46"/>
    </location>
</feature>
<feature type="transmembrane region" description="Helical" evidence="3">
    <location>
        <begin position="47"/>
        <end position="67"/>
    </location>
</feature>
<feature type="topological domain" description="Cytoplasmic" evidence="5">
    <location>
        <begin position="68"/>
        <end position="82"/>
    </location>
</feature>
<feature type="transmembrane region" description="Helical" evidence="3">
    <location>
        <begin position="83"/>
        <end position="103"/>
    </location>
</feature>
<feature type="topological domain" description="Lumenal" evidence="5">
    <location>
        <begin position="104"/>
        <end position="120"/>
    </location>
</feature>
<feature type="transmembrane region" description="Helical" evidence="3">
    <location>
        <begin position="121"/>
        <end position="141"/>
    </location>
</feature>
<feature type="topological domain" description="Cytoplasmic" evidence="5">
    <location>
        <begin position="142"/>
        <end position="155"/>
    </location>
</feature>
<feature type="transmembrane region" description="Helical" evidence="3">
    <location>
        <begin position="156"/>
        <end position="176"/>
    </location>
</feature>
<feature type="topological domain" description="Lumenal" evidence="5">
    <location>
        <begin position="177"/>
        <end position="201"/>
    </location>
</feature>
<feature type="transmembrane region" description="Helical" evidence="3">
    <location>
        <begin position="202"/>
        <end position="222"/>
    </location>
</feature>
<feature type="topological domain" description="Cytoplasmic" evidence="5">
    <location>
        <begin position="223"/>
        <end position="247"/>
    </location>
</feature>
<feature type="domain" description="Cytochrome b561" evidence="4">
    <location>
        <begin position="13"/>
        <end position="223"/>
    </location>
</feature>
<feature type="binding site" description="axial binding residue" evidence="1">
    <location>
        <position position="48"/>
    </location>
    <ligand>
        <name>heme b</name>
        <dbReference type="ChEBI" id="CHEBI:60344"/>
        <label>1</label>
    </ligand>
    <ligandPart>
        <name>Fe</name>
        <dbReference type="ChEBI" id="CHEBI:18248"/>
    </ligandPart>
</feature>
<feature type="binding site" evidence="1">
    <location>
        <position position="68"/>
    </location>
    <ligand>
        <name>heme b</name>
        <dbReference type="ChEBI" id="CHEBI:60344"/>
        <label>2</label>
    </ligand>
</feature>
<feature type="binding site" evidence="1">
    <location>
        <position position="77"/>
    </location>
    <ligand>
        <name>L-ascorbate</name>
        <dbReference type="ChEBI" id="CHEBI:38290"/>
    </ligand>
</feature>
<feature type="binding site" evidence="1">
    <location>
        <position position="81"/>
    </location>
    <ligand>
        <name>L-ascorbate</name>
        <dbReference type="ChEBI" id="CHEBI:38290"/>
    </ligand>
</feature>
<feature type="binding site" description="axial binding residue" evidence="1">
    <location>
        <position position="84"/>
    </location>
    <ligand>
        <name>heme b</name>
        <dbReference type="ChEBI" id="CHEBI:60344"/>
        <label>2</label>
    </ligand>
    <ligandPart>
        <name>Fe</name>
        <dbReference type="ChEBI" id="CHEBI:18248"/>
    </ligandPart>
</feature>
<feature type="binding site" evidence="1">
    <location>
        <begin position="113"/>
        <end position="116"/>
    </location>
    <ligand>
        <name>heme b</name>
        <dbReference type="ChEBI" id="CHEBI:60344"/>
        <label>1</label>
    </ligand>
</feature>
<feature type="binding site" description="axial binding residue" evidence="1">
    <location>
        <position position="118"/>
    </location>
    <ligand>
        <name>heme b</name>
        <dbReference type="ChEBI" id="CHEBI:60344"/>
        <label>1</label>
    </ligand>
    <ligandPart>
        <name>Fe</name>
        <dbReference type="ChEBI" id="CHEBI:18248"/>
    </ligandPart>
</feature>
<feature type="binding site" evidence="1">
    <location>
        <position position="150"/>
    </location>
    <ligand>
        <name>L-ascorbate</name>
        <dbReference type="ChEBI" id="CHEBI:38290"/>
    </ligand>
</feature>
<feature type="binding site" description="axial binding residue" evidence="1">
    <location>
        <position position="157"/>
    </location>
    <ligand>
        <name>heme b</name>
        <dbReference type="ChEBI" id="CHEBI:60344"/>
        <label>2</label>
    </ligand>
    <ligandPart>
        <name>Fe</name>
        <dbReference type="ChEBI" id="CHEBI:18248"/>
    </ligandPart>
</feature>
<feature type="binding site" evidence="1">
    <location>
        <position position="178"/>
    </location>
    <ligand>
        <name>heme b</name>
        <dbReference type="ChEBI" id="CHEBI:60344"/>
        <label>1</label>
    </ligand>
</feature>
<feature type="binding site" evidence="1">
    <location>
        <position position="228"/>
    </location>
    <ligand>
        <name>heme b</name>
        <dbReference type="ChEBI" id="CHEBI:60344"/>
        <label>2</label>
    </ligand>
</feature>
<feature type="glycosylation site" description="N-linked (GlcNAc...) asparagine" evidence="3">
    <location>
        <position position="189"/>
    </location>
</feature>
<feature type="sequence conflict" description="In Ref. 2; AAI53669." evidence="5" ref="2">
    <original>A</original>
    <variation>V</variation>
    <location>
        <position position="64"/>
    </location>
</feature>
<feature type="sequence conflict" description="In Ref. 2; AAH93310." evidence="5" ref="2">
    <original>L</original>
    <variation>I</variation>
    <location>
        <position position="114"/>
    </location>
</feature>
<feature type="sequence conflict" description="In Ref. 2; AAH93310." evidence="5" ref="2">
    <original>A</original>
    <variation>T</variation>
    <location>
        <position position="126"/>
    </location>
</feature>
<gene>
    <name type="primary">cyb561a3a</name>
    <name type="synonym">cybasc3</name>
    <name type="ORF">si:dkeyp-38h2.4</name>
</gene>
<comment type="function">
    <text evidence="2">Transmembrane reductase that uses ascorbate as an electron donor in the cytoplasm and transfers electrons across membranes to reduce iron cations Fe(3+) into Fe(2+) in the lumen of the late endosome and lysosome. Reduced iron can then be extruded from the late endosome and lysosome to the cytoplasm by divalent metal-specific transporters. It is therefore most probably involved in endosomal and lysosomal cellular iron homeostasis.</text>
</comment>
<comment type="catalytic activity">
    <reaction evidence="2">
        <text>Fe(3+)(out) + L-ascorbate(in) = monodehydro-L-ascorbate radical(in) + Fe(2+)(out) + H(+)</text>
        <dbReference type="Rhea" id="RHEA:30403"/>
        <dbReference type="ChEBI" id="CHEBI:15378"/>
        <dbReference type="ChEBI" id="CHEBI:29033"/>
        <dbReference type="ChEBI" id="CHEBI:29034"/>
        <dbReference type="ChEBI" id="CHEBI:38290"/>
        <dbReference type="ChEBI" id="CHEBI:59513"/>
        <dbReference type="EC" id="7.2.1.3"/>
    </reaction>
    <physiologicalReaction direction="left-to-right" evidence="2">
        <dbReference type="Rhea" id="RHEA:30404"/>
    </physiologicalReaction>
</comment>
<comment type="cofactor">
    <cofactor evidence="1">
        <name>heme b</name>
        <dbReference type="ChEBI" id="CHEBI:60344"/>
    </cofactor>
    <text evidence="1">Binds 2 heme b groups non-covalently.</text>
</comment>
<comment type="subunit">
    <text evidence="1">Homodimer.</text>
</comment>
<comment type="subcellular location">
    <subcellularLocation>
        <location evidence="2">Late endosome membrane</location>
        <topology evidence="1">Multi-pass membrane protein</topology>
    </subcellularLocation>
    <subcellularLocation>
        <location evidence="2">Lysosome membrane</location>
        <topology evidence="1">Multi-pass membrane protein</topology>
    </subcellularLocation>
</comment>
<comment type="sequence caution" evidence="5">
    <conflict type="erroneous initiation">
        <sequence resource="EMBL-CDS" id="AAH93310"/>
    </conflict>
    <text>Extended N-terminus.</text>
</comment>
<comment type="sequence caution" evidence="5">
    <conflict type="frameshift">
        <sequence resource="EMBL-CDS" id="AAH93310"/>
    </conflict>
</comment>
<protein>
    <recommendedName>
        <fullName evidence="5">Lysosomal membrane ascorbate-dependent ferrireductase CYB561A3</fullName>
        <ecNumber evidence="2">7.2.1.3</ecNumber>
    </recommendedName>
    <alternativeName>
        <fullName>Cytochrome b ascorbate-dependent protein 3</fullName>
    </alternativeName>
    <alternativeName>
        <fullName>Cytochrome b561 family member A3</fullName>
    </alternativeName>
    <alternativeName>
        <fullName evidence="2">Lysosomal cytochrome b</fullName>
        <shortName evidence="2">LCytb</shortName>
    </alternativeName>
</protein>